<feature type="chain" id="PRO_1000043748" description="GTP cyclohydrolase 1">
    <location>
        <begin position="1"/>
        <end position="184"/>
    </location>
</feature>
<feature type="binding site" evidence="2">
    <location>
        <position position="75"/>
    </location>
    <ligand>
        <name>Zn(2+)</name>
        <dbReference type="ChEBI" id="CHEBI:29105"/>
    </ligand>
</feature>
<feature type="binding site" evidence="2">
    <location>
        <position position="78"/>
    </location>
    <ligand>
        <name>Zn(2+)</name>
        <dbReference type="ChEBI" id="CHEBI:29105"/>
    </ligand>
</feature>
<feature type="binding site" evidence="2">
    <location>
        <position position="146"/>
    </location>
    <ligand>
        <name>Zn(2+)</name>
        <dbReference type="ChEBI" id="CHEBI:29105"/>
    </ligand>
</feature>
<reference key="1">
    <citation type="journal article" date="2007" name="J. Bacteriol.">
        <title>Genome of the opportunistic pathogen Streptococcus sanguinis.</title>
        <authorList>
            <person name="Xu P."/>
            <person name="Alves J.M."/>
            <person name="Kitten T."/>
            <person name="Brown A."/>
            <person name="Chen Z."/>
            <person name="Ozaki L.S."/>
            <person name="Manque P."/>
            <person name="Ge X."/>
            <person name="Serrano M.G."/>
            <person name="Puiu D."/>
            <person name="Hendricks S."/>
            <person name="Wang Y."/>
            <person name="Chaplin M.D."/>
            <person name="Akan D."/>
            <person name="Paik S."/>
            <person name="Peterson D.L."/>
            <person name="Macrina F.L."/>
            <person name="Buck G.A."/>
        </authorList>
    </citation>
    <scope>NUCLEOTIDE SEQUENCE [LARGE SCALE GENOMIC DNA]</scope>
    <source>
        <strain>SK36</strain>
    </source>
</reference>
<keyword id="KW-0342">GTP-binding</keyword>
<keyword id="KW-0378">Hydrolase</keyword>
<keyword id="KW-0479">Metal-binding</keyword>
<keyword id="KW-0547">Nucleotide-binding</keyword>
<keyword id="KW-0554">One-carbon metabolism</keyword>
<keyword id="KW-1185">Reference proteome</keyword>
<keyword id="KW-0862">Zinc</keyword>
<accession>A3CKF4</accession>
<protein>
    <recommendedName>
        <fullName evidence="2">GTP cyclohydrolase 1</fullName>
        <ecNumber evidence="2">3.5.4.16</ecNumber>
    </recommendedName>
    <alternativeName>
        <fullName evidence="2">GTP cyclohydrolase I</fullName>
        <shortName evidence="2">GTP-CH-I</shortName>
    </alternativeName>
</protein>
<sequence>MDTKKIEAAVAQIIEAVGEDGSREGLQETPQRIAKMYQEIFAGLGETAEEHLAKSFEIIDNNMVVEKDIFFHSMCEHHFLPFYGKVHIAYVPNGRVAGLSKLARTVEVYAKKPQIQERLTVEIAEALMDYLGAQGALVWVEAEHMCMNMRGVRKPGTATVTTAARGVLATDKDLKNEAYKLMGH</sequence>
<proteinExistence type="inferred from homology"/>
<name>GCH1_STRSV</name>
<organism>
    <name type="scientific">Streptococcus sanguinis (strain SK36)</name>
    <dbReference type="NCBI Taxonomy" id="388919"/>
    <lineage>
        <taxon>Bacteria</taxon>
        <taxon>Bacillati</taxon>
        <taxon>Bacillota</taxon>
        <taxon>Bacilli</taxon>
        <taxon>Lactobacillales</taxon>
        <taxon>Streptococcaceae</taxon>
        <taxon>Streptococcus</taxon>
    </lineage>
</organism>
<comment type="catalytic activity">
    <reaction evidence="2">
        <text>GTP + H2O = 7,8-dihydroneopterin 3'-triphosphate + formate + H(+)</text>
        <dbReference type="Rhea" id="RHEA:17473"/>
        <dbReference type="ChEBI" id="CHEBI:15377"/>
        <dbReference type="ChEBI" id="CHEBI:15378"/>
        <dbReference type="ChEBI" id="CHEBI:15740"/>
        <dbReference type="ChEBI" id="CHEBI:37565"/>
        <dbReference type="ChEBI" id="CHEBI:58462"/>
        <dbReference type="EC" id="3.5.4.16"/>
    </reaction>
</comment>
<comment type="pathway">
    <text evidence="2">Cofactor biosynthesis; 7,8-dihydroneopterin triphosphate biosynthesis; 7,8-dihydroneopterin triphosphate from GTP: step 1/1.</text>
</comment>
<comment type="subunit">
    <text evidence="1">Toroid-shaped homodecamer, composed of two pentamers of five dimers.</text>
</comment>
<comment type="similarity">
    <text evidence="2">Belongs to the GTP cyclohydrolase I family.</text>
</comment>
<gene>
    <name evidence="2" type="primary">folE</name>
    <name type="ordered locus">SSA_0199</name>
</gene>
<evidence type="ECO:0000250" key="1"/>
<evidence type="ECO:0000255" key="2">
    <source>
        <dbReference type="HAMAP-Rule" id="MF_00223"/>
    </source>
</evidence>
<dbReference type="EC" id="3.5.4.16" evidence="2"/>
<dbReference type="EMBL" id="CP000387">
    <property type="protein sequence ID" value="ABN43659.1"/>
    <property type="molecule type" value="Genomic_DNA"/>
</dbReference>
<dbReference type="RefSeq" id="WP_002896758.1">
    <property type="nucleotide sequence ID" value="NZ_CAXTYR010000003.1"/>
</dbReference>
<dbReference type="RefSeq" id="YP_001034209.1">
    <property type="nucleotide sequence ID" value="NC_009009.1"/>
</dbReference>
<dbReference type="SMR" id="A3CKF4"/>
<dbReference type="STRING" id="388919.SSA_0199"/>
<dbReference type="KEGG" id="ssa:SSA_0199"/>
<dbReference type="PATRIC" id="fig|388919.9.peg.193"/>
<dbReference type="eggNOG" id="COG0302">
    <property type="taxonomic scope" value="Bacteria"/>
</dbReference>
<dbReference type="HOGENOM" id="CLU_049768_3_3_9"/>
<dbReference type="OrthoDB" id="9801207at2"/>
<dbReference type="UniPathway" id="UPA00848">
    <property type="reaction ID" value="UER00151"/>
</dbReference>
<dbReference type="Proteomes" id="UP000002148">
    <property type="component" value="Chromosome"/>
</dbReference>
<dbReference type="GO" id="GO:0005737">
    <property type="term" value="C:cytoplasm"/>
    <property type="evidence" value="ECO:0007669"/>
    <property type="project" value="TreeGrafter"/>
</dbReference>
<dbReference type="GO" id="GO:0005525">
    <property type="term" value="F:GTP binding"/>
    <property type="evidence" value="ECO:0007669"/>
    <property type="project" value="UniProtKB-KW"/>
</dbReference>
<dbReference type="GO" id="GO:0003934">
    <property type="term" value="F:GTP cyclohydrolase I activity"/>
    <property type="evidence" value="ECO:0007669"/>
    <property type="project" value="UniProtKB-UniRule"/>
</dbReference>
<dbReference type="GO" id="GO:0008270">
    <property type="term" value="F:zinc ion binding"/>
    <property type="evidence" value="ECO:0007669"/>
    <property type="project" value="UniProtKB-UniRule"/>
</dbReference>
<dbReference type="GO" id="GO:0006730">
    <property type="term" value="P:one-carbon metabolic process"/>
    <property type="evidence" value="ECO:0007669"/>
    <property type="project" value="UniProtKB-UniRule"/>
</dbReference>
<dbReference type="GO" id="GO:0006729">
    <property type="term" value="P:tetrahydrobiopterin biosynthetic process"/>
    <property type="evidence" value="ECO:0007669"/>
    <property type="project" value="TreeGrafter"/>
</dbReference>
<dbReference type="GO" id="GO:0046654">
    <property type="term" value="P:tetrahydrofolate biosynthetic process"/>
    <property type="evidence" value="ECO:0007669"/>
    <property type="project" value="UniProtKB-UniRule"/>
</dbReference>
<dbReference type="CDD" id="cd00642">
    <property type="entry name" value="GTP_cyclohydro1"/>
    <property type="match status" value="1"/>
</dbReference>
<dbReference type="FunFam" id="1.10.286.10:FF:000001">
    <property type="entry name" value="GTP cyclohydrolase 1"/>
    <property type="match status" value="1"/>
</dbReference>
<dbReference type="FunFam" id="3.30.1130.10:FF:000001">
    <property type="entry name" value="GTP cyclohydrolase 1"/>
    <property type="match status" value="1"/>
</dbReference>
<dbReference type="Gene3D" id="1.10.286.10">
    <property type="match status" value="1"/>
</dbReference>
<dbReference type="Gene3D" id="3.30.1130.10">
    <property type="match status" value="1"/>
</dbReference>
<dbReference type="HAMAP" id="MF_00223">
    <property type="entry name" value="FolE"/>
    <property type="match status" value="1"/>
</dbReference>
<dbReference type="InterPro" id="IPR043133">
    <property type="entry name" value="GTP-CH-I_C/QueF"/>
</dbReference>
<dbReference type="InterPro" id="IPR043134">
    <property type="entry name" value="GTP-CH-I_N"/>
</dbReference>
<dbReference type="InterPro" id="IPR001474">
    <property type="entry name" value="GTP_CycHdrlase_I"/>
</dbReference>
<dbReference type="InterPro" id="IPR018234">
    <property type="entry name" value="GTP_CycHdrlase_I_CS"/>
</dbReference>
<dbReference type="InterPro" id="IPR020602">
    <property type="entry name" value="GTP_CycHdrlase_I_dom"/>
</dbReference>
<dbReference type="NCBIfam" id="TIGR00063">
    <property type="entry name" value="folE"/>
    <property type="match status" value="1"/>
</dbReference>
<dbReference type="NCBIfam" id="NF006825">
    <property type="entry name" value="PRK09347.1-2"/>
    <property type="match status" value="1"/>
</dbReference>
<dbReference type="NCBIfam" id="NF006826">
    <property type="entry name" value="PRK09347.1-3"/>
    <property type="match status" value="1"/>
</dbReference>
<dbReference type="PANTHER" id="PTHR11109:SF7">
    <property type="entry name" value="GTP CYCLOHYDROLASE 1"/>
    <property type="match status" value="1"/>
</dbReference>
<dbReference type="PANTHER" id="PTHR11109">
    <property type="entry name" value="GTP CYCLOHYDROLASE I"/>
    <property type="match status" value="1"/>
</dbReference>
<dbReference type="Pfam" id="PF01227">
    <property type="entry name" value="GTP_cyclohydroI"/>
    <property type="match status" value="1"/>
</dbReference>
<dbReference type="SUPFAM" id="SSF55620">
    <property type="entry name" value="Tetrahydrobiopterin biosynthesis enzymes-like"/>
    <property type="match status" value="1"/>
</dbReference>
<dbReference type="PROSITE" id="PS00859">
    <property type="entry name" value="GTP_CYCLOHYDROL_1_1"/>
    <property type="match status" value="1"/>
</dbReference>
<dbReference type="PROSITE" id="PS00860">
    <property type="entry name" value="GTP_CYCLOHYDROL_1_2"/>
    <property type="match status" value="1"/>
</dbReference>